<keyword id="KW-0066">ATP synthesis</keyword>
<keyword id="KW-0067">ATP-binding</keyword>
<keyword id="KW-1003">Cell membrane</keyword>
<keyword id="KW-0375">Hydrogen ion transport</keyword>
<keyword id="KW-0406">Ion transport</keyword>
<keyword id="KW-0472">Membrane</keyword>
<keyword id="KW-0547">Nucleotide-binding</keyword>
<keyword id="KW-1185">Reference proteome</keyword>
<keyword id="KW-1278">Translocase</keyword>
<keyword id="KW-0813">Transport</keyword>
<evidence type="ECO:0000255" key="1">
    <source>
        <dbReference type="HAMAP-Rule" id="MF_00309"/>
    </source>
</evidence>
<gene>
    <name evidence="1" type="primary">atpA</name>
    <name type="ordered locus">MTH_955</name>
</gene>
<sequence length="584" mass="64895">MTQEGRIIKIAGPVIIAEGMRGSQMYEMVKVGEDKLIGEIIELEGDTATIQVYEETAGIKPGETVERTGGPLSVELGPGILGSIFDGIQRPLENIKALTGDYIERGVDVPSLPKDKKWTFKPTAREGQMVKGGDIIGEVEETSSITHRIMIPPNVEGKLTMIAPQGEYTVLDDIAEVETESGTEKIQMLQKWPVRKGRPYKKKLDPDVPLVTGQRAQDTFFSVAKGGTAAIPGPFGSGKTVTQQQLAKWADADIIVYVGCGERGNEMTEVLKEFPELEDPKTGNPLMDRTVLIANTSNMPVAAREACVYTGITIAEYFRDMGYDVALMADSTSRWAEAMREISGRLEEMPGEEGYPAYLASRLAQFYERAGRVTTIGSEDKIASVSVVGAVSPPGGDLSEPVTQNTLRICKVFWALDASLADKRHFPSIDWLQSYSLYIDSVQEWWASNVDPEWRKFRDEAMALLQKEAELQEIVQLVGPDALPDRERITLETTRMIREDFLQQNAYHEVDTYCSPSKQFEMLRTIIMFHRNATAALEKGAPAADIISLPVKEDIGRMKYIPEEEFPARIKEIQERIVKECSEV</sequence>
<dbReference type="EC" id="7.1.2.2" evidence="1"/>
<dbReference type="EMBL" id="AE000666">
    <property type="protein sequence ID" value="AAB85451.1"/>
    <property type="molecule type" value="Genomic_DNA"/>
</dbReference>
<dbReference type="PIR" id="G69227">
    <property type="entry name" value="G69227"/>
</dbReference>
<dbReference type="RefSeq" id="WP_010876586.1">
    <property type="nucleotide sequence ID" value="NC_000916.1"/>
</dbReference>
<dbReference type="SMR" id="O27036"/>
<dbReference type="FunCoup" id="O27036">
    <property type="interactions" value="94"/>
</dbReference>
<dbReference type="IntAct" id="O27036">
    <property type="interactions" value="3"/>
</dbReference>
<dbReference type="STRING" id="187420.MTH_955"/>
<dbReference type="PaxDb" id="187420-MTH_955"/>
<dbReference type="EnsemblBacteria" id="AAB85451">
    <property type="protein sequence ID" value="AAB85451"/>
    <property type="gene ID" value="MTH_955"/>
</dbReference>
<dbReference type="GeneID" id="1471363"/>
<dbReference type="KEGG" id="mth:MTH_955"/>
<dbReference type="PATRIC" id="fig|187420.15.peg.938"/>
<dbReference type="HOGENOM" id="CLU_008162_3_1_2"/>
<dbReference type="InParanoid" id="O27036"/>
<dbReference type="Proteomes" id="UP000005223">
    <property type="component" value="Chromosome"/>
</dbReference>
<dbReference type="GO" id="GO:0005886">
    <property type="term" value="C:plasma membrane"/>
    <property type="evidence" value="ECO:0007669"/>
    <property type="project" value="UniProtKB-SubCell"/>
</dbReference>
<dbReference type="GO" id="GO:0033178">
    <property type="term" value="C:proton-transporting two-sector ATPase complex, catalytic domain"/>
    <property type="evidence" value="ECO:0007669"/>
    <property type="project" value="InterPro"/>
</dbReference>
<dbReference type="GO" id="GO:0005524">
    <property type="term" value="F:ATP binding"/>
    <property type="evidence" value="ECO:0007669"/>
    <property type="project" value="UniProtKB-UniRule"/>
</dbReference>
<dbReference type="GO" id="GO:0046933">
    <property type="term" value="F:proton-transporting ATP synthase activity, rotational mechanism"/>
    <property type="evidence" value="ECO:0007669"/>
    <property type="project" value="UniProtKB-UniRule"/>
</dbReference>
<dbReference type="GO" id="GO:0046961">
    <property type="term" value="F:proton-transporting ATPase activity, rotational mechanism"/>
    <property type="evidence" value="ECO:0007669"/>
    <property type="project" value="InterPro"/>
</dbReference>
<dbReference type="GO" id="GO:0042777">
    <property type="term" value="P:proton motive force-driven plasma membrane ATP synthesis"/>
    <property type="evidence" value="ECO:0007669"/>
    <property type="project" value="UniProtKB-UniRule"/>
</dbReference>
<dbReference type="CDD" id="cd18111">
    <property type="entry name" value="ATP-synt_V_A-type_alpha_C"/>
    <property type="match status" value="1"/>
</dbReference>
<dbReference type="CDD" id="cd18119">
    <property type="entry name" value="ATP-synt_V_A-type_alpha_N"/>
    <property type="match status" value="1"/>
</dbReference>
<dbReference type="CDD" id="cd01134">
    <property type="entry name" value="V_A-ATPase_A"/>
    <property type="match status" value="1"/>
</dbReference>
<dbReference type="FunFam" id="1.10.1140.10:FF:000002">
    <property type="entry name" value="V-type proton ATPase catalytic subunit A"/>
    <property type="match status" value="1"/>
</dbReference>
<dbReference type="FunFam" id="2.40.30.20:FF:000002">
    <property type="entry name" value="V-type proton ATPase catalytic subunit A"/>
    <property type="match status" value="1"/>
</dbReference>
<dbReference type="FunFam" id="2.40.50.100:FF:000008">
    <property type="entry name" value="V-type proton ATPase catalytic subunit A"/>
    <property type="match status" value="1"/>
</dbReference>
<dbReference type="Gene3D" id="2.40.30.20">
    <property type="match status" value="1"/>
</dbReference>
<dbReference type="Gene3D" id="2.40.50.100">
    <property type="match status" value="1"/>
</dbReference>
<dbReference type="Gene3D" id="1.10.1140.10">
    <property type="entry name" value="Bovine Mitochondrial F1-atpase, Atp Synthase Beta Chain, Chain D, domain 3"/>
    <property type="match status" value="1"/>
</dbReference>
<dbReference type="Gene3D" id="3.40.50.300">
    <property type="entry name" value="P-loop containing nucleotide triphosphate hydrolases"/>
    <property type="match status" value="1"/>
</dbReference>
<dbReference type="HAMAP" id="MF_00309">
    <property type="entry name" value="ATP_synth_A_arch"/>
    <property type="match status" value="1"/>
</dbReference>
<dbReference type="InterPro" id="IPR055190">
    <property type="entry name" value="ATP-synt_VA_C"/>
</dbReference>
<dbReference type="InterPro" id="IPR031686">
    <property type="entry name" value="ATP-synth_a_Xtn"/>
</dbReference>
<dbReference type="InterPro" id="IPR023366">
    <property type="entry name" value="ATP_synth_asu-like_sf"/>
</dbReference>
<dbReference type="InterPro" id="IPR005726">
    <property type="entry name" value="ATP_synth_asu_arc"/>
</dbReference>
<dbReference type="InterPro" id="IPR020003">
    <property type="entry name" value="ATPase_a/bsu_AS"/>
</dbReference>
<dbReference type="InterPro" id="IPR004100">
    <property type="entry name" value="ATPase_F1/V1/A1_a/bsu_N"/>
</dbReference>
<dbReference type="InterPro" id="IPR036121">
    <property type="entry name" value="ATPase_F1/V1/A1_a/bsu_N_sf"/>
</dbReference>
<dbReference type="InterPro" id="IPR000194">
    <property type="entry name" value="ATPase_F1/V1/A1_a/bsu_nucl-bd"/>
</dbReference>
<dbReference type="InterPro" id="IPR024034">
    <property type="entry name" value="ATPase_F1/V1_b/a_C"/>
</dbReference>
<dbReference type="InterPro" id="IPR027417">
    <property type="entry name" value="P-loop_NTPase"/>
</dbReference>
<dbReference type="InterPro" id="IPR022878">
    <property type="entry name" value="V-ATPase_asu"/>
</dbReference>
<dbReference type="NCBIfam" id="TIGR01043">
    <property type="entry name" value="ATP_syn_A_arch"/>
    <property type="match status" value="1"/>
</dbReference>
<dbReference type="NCBIfam" id="NF003220">
    <property type="entry name" value="PRK04192.1"/>
    <property type="match status" value="1"/>
</dbReference>
<dbReference type="PANTHER" id="PTHR43607:SF1">
    <property type="entry name" value="H(+)-TRANSPORTING TWO-SECTOR ATPASE"/>
    <property type="match status" value="1"/>
</dbReference>
<dbReference type="PANTHER" id="PTHR43607">
    <property type="entry name" value="V-TYPE PROTON ATPASE CATALYTIC SUBUNIT A"/>
    <property type="match status" value="1"/>
</dbReference>
<dbReference type="Pfam" id="PF00006">
    <property type="entry name" value="ATP-synt_ab"/>
    <property type="match status" value="1"/>
</dbReference>
<dbReference type="Pfam" id="PF02874">
    <property type="entry name" value="ATP-synt_ab_N"/>
    <property type="match status" value="1"/>
</dbReference>
<dbReference type="Pfam" id="PF16886">
    <property type="entry name" value="ATP-synt_ab_Xtn"/>
    <property type="match status" value="1"/>
</dbReference>
<dbReference type="Pfam" id="PF22919">
    <property type="entry name" value="ATP-synt_VA_C"/>
    <property type="match status" value="1"/>
</dbReference>
<dbReference type="SUPFAM" id="SSF47917">
    <property type="entry name" value="C-terminal domain of alpha and beta subunits of F1 ATP synthase"/>
    <property type="match status" value="1"/>
</dbReference>
<dbReference type="SUPFAM" id="SSF50615">
    <property type="entry name" value="N-terminal domain of alpha and beta subunits of F1 ATP synthase"/>
    <property type="match status" value="1"/>
</dbReference>
<dbReference type="SUPFAM" id="SSF52540">
    <property type="entry name" value="P-loop containing nucleoside triphosphate hydrolases"/>
    <property type="match status" value="1"/>
</dbReference>
<dbReference type="PROSITE" id="PS00152">
    <property type="entry name" value="ATPASE_ALPHA_BETA"/>
    <property type="match status" value="1"/>
</dbReference>
<accession>O27036</accession>
<feature type="chain" id="PRO_0000144601" description="A-type ATP synthase subunit A">
    <location>
        <begin position="1"/>
        <end position="584"/>
    </location>
</feature>
<feature type="binding site" evidence="1">
    <location>
        <begin position="233"/>
        <end position="240"/>
    </location>
    <ligand>
        <name>ATP</name>
        <dbReference type="ChEBI" id="CHEBI:30616"/>
    </ligand>
</feature>
<reference key="1">
    <citation type="journal article" date="1997" name="J. Bacteriol.">
        <title>Complete genome sequence of Methanobacterium thermoautotrophicum deltaH: functional analysis and comparative genomics.</title>
        <authorList>
            <person name="Smith D.R."/>
            <person name="Doucette-Stamm L.A."/>
            <person name="Deloughery C."/>
            <person name="Lee H.-M."/>
            <person name="Dubois J."/>
            <person name="Aldredge T."/>
            <person name="Bashirzadeh R."/>
            <person name="Blakely D."/>
            <person name="Cook R."/>
            <person name="Gilbert K."/>
            <person name="Harrison D."/>
            <person name="Hoang L."/>
            <person name="Keagle P."/>
            <person name="Lumm W."/>
            <person name="Pothier B."/>
            <person name="Qiu D."/>
            <person name="Spadafora R."/>
            <person name="Vicare R."/>
            <person name="Wang Y."/>
            <person name="Wierzbowski J."/>
            <person name="Gibson R."/>
            <person name="Jiwani N."/>
            <person name="Caruso A."/>
            <person name="Bush D."/>
            <person name="Safer H."/>
            <person name="Patwell D."/>
            <person name="Prabhakar S."/>
            <person name="McDougall S."/>
            <person name="Shimer G."/>
            <person name="Goyal A."/>
            <person name="Pietrovski S."/>
            <person name="Church G.M."/>
            <person name="Daniels C.J."/>
            <person name="Mao J.-I."/>
            <person name="Rice P."/>
            <person name="Noelling J."/>
            <person name="Reeve J.N."/>
        </authorList>
    </citation>
    <scope>NUCLEOTIDE SEQUENCE [LARGE SCALE GENOMIC DNA]</scope>
    <source>
        <strain>ATCC 29096 / DSM 1053 / JCM 10044 / NBRC 100330 / Delta H</strain>
    </source>
</reference>
<name>AATA_METTH</name>
<organism>
    <name type="scientific">Methanothermobacter thermautotrophicus (strain ATCC 29096 / DSM 1053 / JCM 10044 / NBRC 100330 / Delta H)</name>
    <name type="common">Methanobacterium thermoautotrophicum</name>
    <dbReference type="NCBI Taxonomy" id="187420"/>
    <lineage>
        <taxon>Archaea</taxon>
        <taxon>Methanobacteriati</taxon>
        <taxon>Methanobacteriota</taxon>
        <taxon>Methanomada group</taxon>
        <taxon>Methanobacteria</taxon>
        <taxon>Methanobacteriales</taxon>
        <taxon>Methanobacteriaceae</taxon>
        <taxon>Methanothermobacter</taxon>
    </lineage>
</organism>
<proteinExistence type="inferred from homology"/>
<comment type="function">
    <text evidence="1">Component of the A-type ATP synthase that produces ATP from ADP in the presence of a proton gradient across the membrane. The A chain is the catalytic subunit.</text>
</comment>
<comment type="catalytic activity">
    <reaction evidence="1">
        <text>ATP + H2O + 4 H(+)(in) = ADP + phosphate + 5 H(+)(out)</text>
        <dbReference type="Rhea" id="RHEA:57720"/>
        <dbReference type="ChEBI" id="CHEBI:15377"/>
        <dbReference type="ChEBI" id="CHEBI:15378"/>
        <dbReference type="ChEBI" id="CHEBI:30616"/>
        <dbReference type="ChEBI" id="CHEBI:43474"/>
        <dbReference type="ChEBI" id="CHEBI:456216"/>
        <dbReference type="EC" id="7.1.2.2"/>
    </reaction>
</comment>
<comment type="subunit">
    <text evidence="1">Has multiple subunits with at least A(3), B(3), C, D, E, F, H, I and proteolipid K(x).</text>
</comment>
<comment type="subcellular location">
    <subcellularLocation>
        <location evidence="1">Cell membrane</location>
        <topology evidence="1">Peripheral membrane protein</topology>
    </subcellularLocation>
</comment>
<comment type="similarity">
    <text evidence="1">Belongs to the ATPase alpha/beta chains family.</text>
</comment>
<protein>
    <recommendedName>
        <fullName evidence="1">A-type ATP synthase subunit A</fullName>
        <ecNumber evidence="1">7.1.2.2</ecNumber>
    </recommendedName>
</protein>